<comment type="function">
    <text evidence="1 4 5">Minus-end microtubule-dependent motor protein (By similarity). Acts as a negative regulator of centrosome separation required to prevent premature centrosome separation during interphase (PubMed:28263957). Required to maintain a centered nucleus to ensure that the spindle is stably oriented at the onset of mitosis (PubMed:28263957). May also act as a negative regulator of amino acid starvation-induced autophagy (PubMed:22354037).</text>
</comment>
<comment type="subunit">
    <text evidence="1">Homotetramer.</text>
</comment>
<comment type="subcellular location">
    <subcellularLocation>
        <location evidence="1">Cytoplasm</location>
        <location evidence="1">Cytoskeleton</location>
        <location evidence="1">Microtubule organizing center</location>
        <location evidence="1">Centrosome</location>
    </subcellularLocation>
</comment>
<comment type="alternative products">
    <event type="alternative splicing"/>
    <isoform>
        <id>Q9UIL4-1</id>
        <name>1</name>
        <sequence type="displayed"/>
    </isoform>
    <isoform>
        <id>Q9UIL4-2</id>
        <name>2</name>
        <sequence type="described" ref="VSP_002867"/>
    </isoform>
</comment>
<comment type="similarity">
    <text evidence="2">Belongs to the TRAFAC class myosin-kinesin ATPase superfamily. Kinesin family.</text>
</comment>
<comment type="caution">
    <text evidence="9">In contrast to the ortholog protein in primates, human KIF25 protein is shorter at the N-terminus. While the kinesin motor domain is intact, it is unknown whether the absence of the N-terminus affects the microtubule-dependent motor activity.</text>
</comment>
<keyword id="KW-0025">Alternative splicing</keyword>
<keyword id="KW-0067">ATP-binding</keyword>
<keyword id="KW-0963">Cytoplasm</keyword>
<keyword id="KW-0206">Cytoskeleton</keyword>
<keyword id="KW-0493">Microtubule</keyword>
<keyword id="KW-0505">Motor protein</keyword>
<keyword id="KW-0547">Nucleotide-binding</keyword>
<keyword id="KW-1185">Reference proteome</keyword>
<name>KIF25_HUMAN</name>
<gene>
    <name evidence="10" type="primary">KIF25</name>
    <name evidence="7" type="synonym">KNSL3</name>
</gene>
<accession>Q9UIL4</accession>
<accession>A8K0C3</accession>
<accession>O94775</accession>
<accession>Q5SZU9</accession>
<feature type="chain" id="PRO_0000125435" description="Kinesin-like protein KIF25">
    <location>
        <begin position="1"/>
        <end position="384"/>
    </location>
</feature>
<feature type="domain" description="Kinesin motor" evidence="2">
    <location>
        <begin position="7"/>
        <end position="363"/>
    </location>
</feature>
<feature type="region of interest" description="Disordered" evidence="3">
    <location>
        <begin position="1"/>
        <end position="20"/>
    </location>
</feature>
<feature type="region of interest" description="Disordered" evidence="3">
    <location>
        <begin position="217"/>
        <end position="256"/>
    </location>
</feature>
<feature type="region of interest" description="Disordered" evidence="3">
    <location>
        <begin position="362"/>
        <end position="384"/>
    </location>
</feature>
<feature type="binding site" evidence="2">
    <location>
        <begin position="65"/>
        <end position="72"/>
    </location>
    <ligand>
        <name>ATP</name>
        <dbReference type="ChEBI" id="CHEBI:30616"/>
    </ligand>
</feature>
<feature type="splice variant" id="VSP_002867" description="In isoform 2." evidence="8">
    <location>
        <begin position="278"/>
        <end position="329"/>
    </location>
</feature>
<feature type="sequence variant" id="VAR_059369" description="In dbSNP:rs4708626." evidence="6">
    <original>K</original>
    <variation>M</variation>
    <location>
        <position position="28"/>
    </location>
</feature>
<feature type="sequence variant" id="VAR_061280" description="In dbSNP:rs34049091.">
    <original>A</original>
    <variation>T</variation>
    <location>
        <position position="41"/>
    </location>
</feature>
<feature type="sequence variant" id="VAR_049687" description="In dbSNP:rs12197062.">
    <original>T</original>
    <variation>P</variation>
    <location>
        <position position="229"/>
    </location>
</feature>
<feature type="sequence variant" id="VAR_049688" description="In dbSNP:rs2073634.">
    <original>A</original>
    <variation>T</variation>
    <location>
        <position position="255"/>
    </location>
</feature>
<feature type="sequence conflict" description="In Ref. 2; BAF82177." evidence="8" ref="2">
    <original>A</original>
    <variation>T</variation>
    <location>
        <position position="185"/>
    </location>
</feature>
<proteinExistence type="evidence at transcript level"/>
<sequence length="384" mass="40686">MTWTSGQLQREKQARPGSGAVLAFPDDKDLRVYGPAESQSAVFGDVCPLLTSLLDGYNVCVMAYGQTGSGKSYTMLGRHSDDGPVLPLDPQSDLGIIPRVAEELFRLILENTSRSPKVEVSIVEVYNNDIFDLLAKDSIAAVSGVKREVVTAKDGRTEVALLASEAVGSASKLMELVHGGLQLRAKHPTLVHADSSRSHLIITVTLTTASCSDSTADQACSATLPREQTEAGRAGRSRRASQGALAPQLVPGNPAGHAEQVQARLQLVDSAGSECVGVSGVTGLALREMACISRSLAALAGVLGALLEHRGHAPYRNSRLTHLLQDCLGGDAKLLVILCISPSQRHLAQTLQGLGFGIRARQVQRGPARKKPPSSQTEGKRRPD</sequence>
<dbReference type="EMBL" id="AB012722">
    <property type="protein sequence ID" value="BAA36417.1"/>
    <property type="molecule type" value="mRNA"/>
</dbReference>
<dbReference type="EMBL" id="AK289488">
    <property type="protein sequence ID" value="BAF82177.1"/>
    <property type="molecule type" value="mRNA"/>
</dbReference>
<dbReference type="EMBL" id="AB012723">
    <property type="protein sequence ID" value="BAA36418.1"/>
    <property type="molecule type" value="Genomic_DNA"/>
</dbReference>
<dbReference type="EMBL" id="AL589733">
    <property type="status" value="NOT_ANNOTATED_CDS"/>
    <property type="molecule type" value="Genomic_DNA"/>
</dbReference>
<dbReference type="CCDS" id="CCDS5305.1">
    <molecule id="Q9UIL4-1"/>
</dbReference>
<dbReference type="RefSeq" id="NP_005346.3">
    <molecule id="Q9UIL4-2"/>
    <property type="nucleotide sequence ID" value="NM_005355.3"/>
</dbReference>
<dbReference type="RefSeq" id="NP_085118.2">
    <molecule id="Q9UIL4-1"/>
    <property type="nucleotide sequence ID" value="NM_030615.4"/>
</dbReference>
<dbReference type="RefSeq" id="XP_011534104.1">
    <property type="nucleotide sequence ID" value="XM_011535802.2"/>
</dbReference>
<dbReference type="RefSeq" id="XP_011534105.1">
    <molecule id="Q9UIL4-2"/>
    <property type="nucleotide sequence ID" value="XM_011535803.4"/>
</dbReference>
<dbReference type="RefSeq" id="XP_047274705.1">
    <molecule id="Q9UIL4-1"/>
    <property type="nucleotide sequence ID" value="XM_047418749.1"/>
</dbReference>
<dbReference type="RefSeq" id="XP_054211354.1">
    <molecule id="Q9UIL4-1"/>
    <property type="nucleotide sequence ID" value="XM_054355379.1"/>
</dbReference>
<dbReference type="RefSeq" id="XP_054211355.1">
    <molecule id="Q9UIL4-1"/>
    <property type="nucleotide sequence ID" value="XM_054355380.1"/>
</dbReference>
<dbReference type="RefSeq" id="XP_054211356.1">
    <molecule id="Q9UIL4-2"/>
    <property type="nucleotide sequence ID" value="XM_054355381.1"/>
</dbReference>
<dbReference type="SMR" id="Q9UIL4"/>
<dbReference type="BioGRID" id="110032">
    <property type="interactions" value="1"/>
</dbReference>
<dbReference type="FunCoup" id="Q9UIL4">
    <property type="interactions" value="89"/>
</dbReference>
<dbReference type="IntAct" id="Q9UIL4">
    <property type="interactions" value="2"/>
</dbReference>
<dbReference type="STRING" id="9606.ENSP00000496229"/>
<dbReference type="iPTMnet" id="Q9UIL4"/>
<dbReference type="PhosphoSitePlus" id="Q9UIL4"/>
<dbReference type="BioMuta" id="KIF25"/>
<dbReference type="DMDM" id="20138788"/>
<dbReference type="MassIVE" id="Q9UIL4"/>
<dbReference type="PaxDb" id="9606-ENSP00000388878"/>
<dbReference type="PeptideAtlas" id="Q9UIL4"/>
<dbReference type="Antibodypedia" id="20075">
    <property type="antibodies" value="298 antibodies from 19 providers"/>
</dbReference>
<dbReference type="DNASU" id="3834"/>
<dbReference type="Ensembl" id="ENST00000443060.6">
    <molecule id="Q9UIL4-1"/>
    <property type="protein sequence ID" value="ENSP00000388878.2"/>
    <property type="gene ID" value="ENSG00000125337.21"/>
</dbReference>
<dbReference type="Ensembl" id="ENST00000643607.3">
    <molecule id="Q9UIL4-1"/>
    <property type="protein sequence ID" value="ENSP00000496229.1"/>
    <property type="gene ID" value="ENSG00000125337.21"/>
</dbReference>
<dbReference type="GeneID" id="3834"/>
<dbReference type="KEGG" id="hsa:3834"/>
<dbReference type="MANE-Select" id="ENST00000643607.3">
    <property type="protein sequence ID" value="ENSP00000496229.1"/>
    <property type="RefSeq nucleotide sequence ID" value="NM_030615.4"/>
    <property type="RefSeq protein sequence ID" value="NP_085118.2"/>
</dbReference>
<dbReference type="UCSC" id="uc003qwk.1">
    <molecule id="Q9UIL4-1"/>
    <property type="organism name" value="human"/>
</dbReference>
<dbReference type="AGR" id="HGNC:6390"/>
<dbReference type="CTD" id="3834"/>
<dbReference type="DisGeNET" id="3834"/>
<dbReference type="GeneCards" id="KIF25"/>
<dbReference type="HGNC" id="HGNC:6390">
    <property type="gene designation" value="KIF25"/>
</dbReference>
<dbReference type="HPA" id="ENSG00000125337">
    <property type="expression patterns" value="Tissue enhanced (brain, retina)"/>
</dbReference>
<dbReference type="MIM" id="603815">
    <property type="type" value="gene"/>
</dbReference>
<dbReference type="neXtProt" id="NX_Q9UIL4"/>
<dbReference type="OpenTargets" id="ENSG00000125337"/>
<dbReference type="PharmGKB" id="PA30179"/>
<dbReference type="VEuPathDB" id="HostDB:ENSG00000125337"/>
<dbReference type="eggNOG" id="KOG0239">
    <property type="taxonomic scope" value="Eukaryota"/>
</dbReference>
<dbReference type="GeneTree" id="ENSGT00940000162166"/>
<dbReference type="HOGENOM" id="CLU_001485_2_2_1"/>
<dbReference type="InParanoid" id="Q9UIL4"/>
<dbReference type="OMA" id="CIGMSGV"/>
<dbReference type="OrthoDB" id="3176171at2759"/>
<dbReference type="PAN-GO" id="Q9UIL4">
    <property type="GO annotations" value="6 GO annotations based on evolutionary models"/>
</dbReference>
<dbReference type="PhylomeDB" id="Q9UIL4"/>
<dbReference type="TreeFam" id="TF105234"/>
<dbReference type="PathwayCommons" id="Q9UIL4"/>
<dbReference type="Reactome" id="R-HSA-6811434">
    <property type="pathway name" value="COPI-dependent Golgi-to-ER retrograde traffic"/>
</dbReference>
<dbReference type="Reactome" id="R-HSA-983189">
    <property type="pathway name" value="Kinesins"/>
</dbReference>
<dbReference type="SignaLink" id="Q9UIL4"/>
<dbReference type="BioGRID-ORCS" id="3834">
    <property type="hits" value="13 hits in 1152 CRISPR screens"/>
</dbReference>
<dbReference type="GenomeRNAi" id="3834"/>
<dbReference type="Pharos" id="Q9UIL4">
    <property type="development level" value="Tbio"/>
</dbReference>
<dbReference type="PRO" id="PR:Q9UIL4"/>
<dbReference type="Proteomes" id="UP000005640">
    <property type="component" value="Chromosome 6"/>
</dbReference>
<dbReference type="RNAct" id="Q9UIL4">
    <property type="molecule type" value="protein"/>
</dbReference>
<dbReference type="Bgee" id="ENSG00000125337">
    <property type="expression patterns" value="Expressed in primordial germ cell in gonad and 106 other cell types or tissues"/>
</dbReference>
<dbReference type="ExpressionAtlas" id="Q9UIL4">
    <property type="expression patterns" value="baseline and differential"/>
</dbReference>
<dbReference type="GO" id="GO:0005813">
    <property type="term" value="C:centrosome"/>
    <property type="evidence" value="ECO:0000250"/>
    <property type="project" value="UniProtKB"/>
</dbReference>
<dbReference type="GO" id="GO:0005737">
    <property type="term" value="C:cytoplasm"/>
    <property type="evidence" value="ECO:0000318"/>
    <property type="project" value="GO_Central"/>
</dbReference>
<dbReference type="GO" id="GO:0005871">
    <property type="term" value="C:kinesin complex"/>
    <property type="evidence" value="ECO:0000318"/>
    <property type="project" value="GO_Central"/>
</dbReference>
<dbReference type="GO" id="GO:0005874">
    <property type="term" value="C:microtubule"/>
    <property type="evidence" value="ECO:0000318"/>
    <property type="project" value="GO_Central"/>
</dbReference>
<dbReference type="GO" id="GO:0005524">
    <property type="term" value="F:ATP binding"/>
    <property type="evidence" value="ECO:0007669"/>
    <property type="project" value="UniProtKB-KW"/>
</dbReference>
<dbReference type="GO" id="GO:0016887">
    <property type="term" value="F:ATP hydrolysis activity"/>
    <property type="evidence" value="ECO:0000318"/>
    <property type="project" value="GO_Central"/>
</dbReference>
<dbReference type="GO" id="GO:0008017">
    <property type="term" value="F:microtubule binding"/>
    <property type="evidence" value="ECO:0000318"/>
    <property type="project" value="GO_Central"/>
</dbReference>
<dbReference type="GO" id="GO:0003777">
    <property type="term" value="F:microtubule motor activity"/>
    <property type="evidence" value="ECO:0000318"/>
    <property type="project" value="GO_Central"/>
</dbReference>
<dbReference type="GO" id="GO:0008569">
    <property type="term" value="F:minus-end-directed microtubule motor activity"/>
    <property type="evidence" value="ECO:0000250"/>
    <property type="project" value="UniProtKB"/>
</dbReference>
<dbReference type="GO" id="GO:0051294">
    <property type="term" value="P:establishment of spindle orientation"/>
    <property type="evidence" value="ECO:0000314"/>
    <property type="project" value="UniProtKB"/>
</dbReference>
<dbReference type="GO" id="GO:0007018">
    <property type="term" value="P:microtubule-based movement"/>
    <property type="evidence" value="ECO:0000318"/>
    <property type="project" value="GO_Central"/>
</dbReference>
<dbReference type="GO" id="GO:0000070">
    <property type="term" value="P:mitotic sister chromatid segregation"/>
    <property type="evidence" value="ECO:0000304"/>
    <property type="project" value="ProtInc"/>
</dbReference>
<dbReference type="GO" id="GO:0010507">
    <property type="term" value="P:negative regulation of autophagy"/>
    <property type="evidence" value="ECO:0000315"/>
    <property type="project" value="BHF-UCL"/>
</dbReference>
<dbReference type="GO" id="GO:0046603">
    <property type="term" value="P:negative regulation of mitotic centrosome separation"/>
    <property type="evidence" value="ECO:0000314"/>
    <property type="project" value="UniProtKB"/>
</dbReference>
<dbReference type="GO" id="GO:0051647">
    <property type="term" value="P:nucleus localization"/>
    <property type="evidence" value="ECO:0000314"/>
    <property type="project" value="UniProtKB"/>
</dbReference>
<dbReference type="GO" id="GO:0006996">
    <property type="term" value="P:organelle organization"/>
    <property type="evidence" value="ECO:0000304"/>
    <property type="project" value="ProtInc"/>
</dbReference>
<dbReference type="GO" id="GO:0051289">
    <property type="term" value="P:protein homotetramerization"/>
    <property type="evidence" value="ECO:0000250"/>
    <property type="project" value="UniProtKB"/>
</dbReference>
<dbReference type="FunFam" id="3.40.850.10:FF:000118">
    <property type="entry name" value="Kinesin-like protein"/>
    <property type="match status" value="1"/>
</dbReference>
<dbReference type="Gene3D" id="3.40.850.10">
    <property type="entry name" value="Kinesin motor domain"/>
    <property type="match status" value="1"/>
</dbReference>
<dbReference type="InterPro" id="IPR027640">
    <property type="entry name" value="Kinesin-like_fam"/>
</dbReference>
<dbReference type="InterPro" id="IPR019821">
    <property type="entry name" value="Kinesin_motor_CS"/>
</dbReference>
<dbReference type="InterPro" id="IPR001752">
    <property type="entry name" value="Kinesin_motor_dom"/>
</dbReference>
<dbReference type="InterPro" id="IPR036961">
    <property type="entry name" value="Kinesin_motor_dom_sf"/>
</dbReference>
<dbReference type="InterPro" id="IPR027417">
    <property type="entry name" value="P-loop_NTPase"/>
</dbReference>
<dbReference type="PANTHER" id="PTHR47972:SF63">
    <property type="entry name" value="KINESIN FAMILY MEMBER 25"/>
    <property type="match status" value="1"/>
</dbReference>
<dbReference type="PANTHER" id="PTHR47972">
    <property type="entry name" value="KINESIN-LIKE PROTEIN KLP-3"/>
    <property type="match status" value="1"/>
</dbReference>
<dbReference type="Pfam" id="PF00225">
    <property type="entry name" value="Kinesin"/>
    <property type="match status" value="1"/>
</dbReference>
<dbReference type="PRINTS" id="PR00380">
    <property type="entry name" value="KINESINHEAVY"/>
</dbReference>
<dbReference type="SMART" id="SM00129">
    <property type="entry name" value="KISc"/>
    <property type="match status" value="1"/>
</dbReference>
<dbReference type="SUPFAM" id="SSF52540">
    <property type="entry name" value="P-loop containing nucleoside triphosphate hydrolases"/>
    <property type="match status" value="1"/>
</dbReference>
<dbReference type="PROSITE" id="PS00411">
    <property type="entry name" value="KINESIN_MOTOR_1"/>
    <property type="match status" value="1"/>
</dbReference>
<dbReference type="PROSITE" id="PS50067">
    <property type="entry name" value="KINESIN_MOTOR_2"/>
    <property type="match status" value="1"/>
</dbReference>
<reference key="1">
    <citation type="journal article" date="1998" name="Cytogenet. Cell Genet.">
        <title>Identification, genomic organization, and alternative splicing of KNSL3, a novel human gene encoding a kinesin-like protein.</title>
        <authorList>
            <person name="Okamoto S."/>
            <person name="Matsushima M."/>
            <person name="Nakamura Y."/>
        </authorList>
    </citation>
    <scope>NUCLEOTIDE SEQUENCE [GENOMIC DNA / MRNA]</scope>
    <scope>ALTERNATIVE SPLICING</scope>
    <scope>VARIANT MET-28</scope>
</reference>
<reference key="2">
    <citation type="journal article" date="2004" name="Nat. Genet.">
        <title>Complete sequencing and characterization of 21,243 full-length human cDNAs.</title>
        <authorList>
            <person name="Ota T."/>
            <person name="Suzuki Y."/>
            <person name="Nishikawa T."/>
            <person name="Otsuki T."/>
            <person name="Sugiyama T."/>
            <person name="Irie R."/>
            <person name="Wakamatsu A."/>
            <person name="Hayashi K."/>
            <person name="Sato H."/>
            <person name="Nagai K."/>
            <person name="Kimura K."/>
            <person name="Makita H."/>
            <person name="Sekine M."/>
            <person name="Obayashi M."/>
            <person name="Nishi T."/>
            <person name="Shibahara T."/>
            <person name="Tanaka T."/>
            <person name="Ishii S."/>
            <person name="Yamamoto J."/>
            <person name="Saito K."/>
            <person name="Kawai Y."/>
            <person name="Isono Y."/>
            <person name="Nakamura Y."/>
            <person name="Nagahari K."/>
            <person name="Murakami K."/>
            <person name="Yasuda T."/>
            <person name="Iwayanagi T."/>
            <person name="Wagatsuma M."/>
            <person name="Shiratori A."/>
            <person name="Sudo H."/>
            <person name="Hosoiri T."/>
            <person name="Kaku Y."/>
            <person name="Kodaira H."/>
            <person name="Kondo H."/>
            <person name="Sugawara M."/>
            <person name="Takahashi M."/>
            <person name="Kanda K."/>
            <person name="Yokoi T."/>
            <person name="Furuya T."/>
            <person name="Kikkawa E."/>
            <person name="Omura Y."/>
            <person name="Abe K."/>
            <person name="Kamihara K."/>
            <person name="Katsuta N."/>
            <person name="Sato K."/>
            <person name="Tanikawa M."/>
            <person name="Yamazaki M."/>
            <person name="Ninomiya K."/>
            <person name="Ishibashi T."/>
            <person name="Yamashita H."/>
            <person name="Murakawa K."/>
            <person name="Fujimori K."/>
            <person name="Tanai H."/>
            <person name="Kimata M."/>
            <person name="Watanabe M."/>
            <person name="Hiraoka S."/>
            <person name="Chiba Y."/>
            <person name="Ishida S."/>
            <person name="Ono Y."/>
            <person name="Takiguchi S."/>
            <person name="Watanabe S."/>
            <person name="Yosida M."/>
            <person name="Hotuta T."/>
            <person name="Kusano J."/>
            <person name="Kanehori K."/>
            <person name="Takahashi-Fujii A."/>
            <person name="Hara H."/>
            <person name="Tanase T.-O."/>
            <person name="Nomura Y."/>
            <person name="Togiya S."/>
            <person name="Komai F."/>
            <person name="Hara R."/>
            <person name="Takeuchi K."/>
            <person name="Arita M."/>
            <person name="Imose N."/>
            <person name="Musashino K."/>
            <person name="Yuuki H."/>
            <person name="Oshima A."/>
            <person name="Sasaki N."/>
            <person name="Aotsuka S."/>
            <person name="Yoshikawa Y."/>
            <person name="Matsunawa H."/>
            <person name="Ichihara T."/>
            <person name="Shiohata N."/>
            <person name="Sano S."/>
            <person name="Moriya S."/>
            <person name="Momiyama H."/>
            <person name="Satoh N."/>
            <person name="Takami S."/>
            <person name="Terashima Y."/>
            <person name="Suzuki O."/>
            <person name="Nakagawa S."/>
            <person name="Senoh A."/>
            <person name="Mizoguchi H."/>
            <person name="Goto Y."/>
            <person name="Shimizu F."/>
            <person name="Wakebe H."/>
            <person name="Hishigaki H."/>
            <person name="Watanabe T."/>
            <person name="Sugiyama A."/>
            <person name="Takemoto M."/>
            <person name="Kawakami B."/>
            <person name="Yamazaki M."/>
            <person name="Watanabe K."/>
            <person name="Kumagai A."/>
            <person name="Itakura S."/>
            <person name="Fukuzumi Y."/>
            <person name="Fujimori Y."/>
            <person name="Komiyama M."/>
            <person name="Tashiro H."/>
            <person name="Tanigami A."/>
            <person name="Fujiwara T."/>
            <person name="Ono T."/>
            <person name="Yamada K."/>
            <person name="Fujii Y."/>
            <person name="Ozaki K."/>
            <person name="Hirao M."/>
            <person name="Ohmori Y."/>
            <person name="Kawabata A."/>
            <person name="Hikiji T."/>
            <person name="Kobatake N."/>
            <person name="Inagaki H."/>
            <person name="Ikema Y."/>
            <person name="Okamoto S."/>
            <person name="Okitani R."/>
            <person name="Kawakami T."/>
            <person name="Noguchi S."/>
            <person name="Itoh T."/>
            <person name="Shigeta K."/>
            <person name="Senba T."/>
            <person name="Matsumura K."/>
            <person name="Nakajima Y."/>
            <person name="Mizuno T."/>
            <person name="Morinaga M."/>
            <person name="Sasaki M."/>
            <person name="Togashi T."/>
            <person name="Oyama M."/>
            <person name="Hata H."/>
            <person name="Watanabe M."/>
            <person name="Komatsu T."/>
            <person name="Mizushima-Sugano J."/>
            <person name="Satoh T."/>
            <person name="Shirai Y."/>
            <person name="Takahashi Y."/>
            <person name="Nakagawa K."/>
            <person name="Okumura K."/>
            <person name="Nagase T."/>
            <person name="Nomura N."/>
            <person name="Kikuchi H."/>
            <person name="Masuho Y."/>
            <person name="Yamashita R."/>
            <person name="Nakai K."/>
            <person name="Yada T."/>
            <person name="Nakamura Y."/>
            <person name="Ohara O."/>
            <person name="Isogai T."/>
            <person name="Sugano S."/>
        </authorList>
    </citation>
    <scope>NUCLEOTIDE SEQUENCE [LARGE SCALE MRNA]</scope>
    <source>
        <tissue>Cerebellum</tissue>
    </source>
</reference>
<reference key="3">
    <citation type="journal article" date="2003" name="Nature">
        <title>The DNA sequence and analysis of human chromosome 6.</title>
        <authorList>
            <person name="Mungall A.J."/>
            <person name="Palmer S.A."/>
            <person name="Sims S.K."/>
            <person name="Edwards C.A."/>
            <person name="Ashurst J.L."/>
            <person name="Wilming L."/>
            <person name="Jones M.C."/>
            <person name="Horton R."/>
            <person name="Hunt S.E."/>
            <person name="Scott C.E."/>
            <person name="Gilbert J.G.R."/>
            <person name="Clamp M.E."/>
            <person name="Bethel G."/>
            <person name="Milne S."/>
            <person name="Ainscough R."/>
            <person name="Almeida J.P."/>
            <person name="Ambrose K.D."/>
            <person name="Andrews T.D."/>
            <person name="Ashwell R.I.S."/>
            <person name="Babbage A.K."/>
            <person name="Bagguley C.L."/>
            <person name="Bailey J."/>
            <person name="Banerjee R."/>
            <person name="Barker D.J."/>
            <person name="Barlow K.F."/>
            <person name="Bates K."/>
            <person name="Beare D.M."/>
            <person name="Beasley H."/>
            <person name="Beasley O."/>
            <person name="Bird C.P."/>
            <person name="Blakey S.E."/>
            <person name="Bray-Allen S."/>
            <person name="Brook J."/>
            <person name="Brown A.J."/>
            <person name="Brown J.Y."/>
            <person name="Burford D.C."/>
            <person name="Burrill W."/>
            <person name="Burton J."/>
            <person name="Carder C."/>
            <person name="Carter N.P."/>
            <person name="Chapman J.C."/>
            <person name="Clark S.Y."/>
            <person name="Clark G."/>
            <person name="Clee C.M."/>
            <person name="Clegg S."/>
            <person name="Cobley V."/>
            <person name="Collier R.E."/>
            <person name="Collins J.E."/>
            <person name="Colman L.K."/>
            <person name="Corby N.R."/>
            <person name="Coville G.J."/>
            <person name="Culley K.M."/>
            <person name="Dhami P."/>
            <person name="Davies J."/>
            <person name="Dunn M."/>
            <person name="Earthrowl M.E."/>
            <person name="Ellington A.E."/>
            <person name="Evans K.A."/>
            <person name="Faulkner L."/>
            <person name="Francis M.D."/>
            <person name="Frankish A."/>
            <person name="Frankland J."/>
            <person name="French L."/>
            <person name="Garner P."/>
            <person name="Garnett J."/>
            <person name="Ghori M.J."/>
            <person name="Gilby L.M."/>
            <person name="Gillson C.J."/>
            <person name="Glithero R.J."/>
            <person name="Grafham D.V."/>
            <person name="Grant M."/>
            <person name="Gribble S."/>
            <person name="Griffiths C."/>
            <person name="Griffiths M.N.D."/>
            <person name="Hall R."/>
            <person name="Halls K.S."/>
            <person name="Hammond S."/>
            <person name="Harley J.L."/>
            <person name="Hart E.A."/>
            <person name="Heath P.D."/>
            <person name="Heathcott R."/>
            <person name="Holmes S.J."/>
            <person name="Howden P.J."/>
            <person name="Howe K.L."/>
            <person name="Howell G.R."/>
            <person name="Huckle E."/>
            <person name="Humphray S.J."/>
            <person name="Humphries M.D."/>
            <person name="Hunt A.R."/>
            <person name="Johnson C.M."/>
            <person name="Joy A.A."/>
            <person name="Kay M."/>
            <person name="Keenan S.J."/>
            <person name="Kimberley A.M."/>
            <person name="King A."/>
            <person name="Laird G.K."/>
            <person name="Langford C."/>
            <person name="Lawlor S."/>
            <person name="Leongamornlert D.A."/>
            <person name="Leversha M."/>
            <person name="Lloyd C.R."/>
            <person name="Lloyd D.M."/>
            <person name="Loveland J.E."/>
            <person name="Lovell J."/>
            <person name="Martin S."/>
            <person name="Mashreghi-Mohammadi M."/>
            <person name="Maslen G.L."/>
            <person name="Matthews L."/>
            <person name="McCann O.T."/>
            <person name="McLaren S.J."/>
            <person name="McLay K."/>
            <person name="McMurray A."/>
            <person name="Moore M.J.F."/>
            <person name="Mullikin J.C."/>
            <person name="Niblett D."/>
            <person name="Nickerson T."/>
            <person name="Novik K.L."/>
            <person name="Oliver K."/>
            <person name="Overton-Larty E.K."/>
            <person name="Parker A."/>
            <person name="Patel R."/>
            <person name="Pearce A.V."/>
            <person name="Peck A.I."/>
            <person name="Phillimore B.J.C.T."/>
            <person name="Phillips S."/>
            <person name="Plumb R.W."/>
            <person name="Porter K.M."/>
            <person name="Ramsey Y."/>
            <person name="Ranby S.A."/>
            <person name="Rice C.M."/>
            <person name="Ross M.T."/>
            <person name="Searle S.M."/>
            <person name="Sehra H.K."/>
            <person name="Sheridan E."/>
            <person name="Skuce C.D."/>
            <person name="Smith S."/>
            <person name="Smith M."/>
            <person name="Spraggon L."/>
            <person name="Squares S.L."/>
            <person name="Steward C.A."/>
            <person name="Sycamore N."/>
            <person name="Tamlyn-Hall G."/>
            <person name="Tester J."/>
            <person name="Theaker A.J."/>
            <person name="Thomas D.W."/>
            <person name="Thorpe A."/>
            <person name="Tracey A."/>
            <person name="Tromans A."/>
            <person name="Tubby B."/>
            <person name="Wall M."/>
            <person name="Wallis J.M."/>
            <person name="West A.P."/>
            <person name="White S.S."/>
            <person name="Whitehead S.L."/>
            <person name="Whittaker H."/>
            <person name="Wild A."/>
            <person name="Willey D.J."/>
            <person name="Wilmer T.E."/>
            <person name="Wood J.M."/>
            <person name="Wray P.W."/>
            <person name="Wyatt J.C."/>
            <person name="Young L."/>
            <person name="Younger R.M."/>
            <person name="Bentley D.R."/>
            <person name="Coulson A."/>
            <person name="Durbin R.M."/>
            <person name="Hubbard T."/>
            <person name="Sulston J.E."/>
            <person name="Dunham I."/>
            <person name="Rogers J."/>
            <person name="Beck S."/>
        </authorList>
    </citation>
    <scope>NUCLEOTIDE SEQUENCE [LARGE SCALE GENOMIC DNA]</scope>
</reference>
<reference key="4">
    <citation type="journal article" date="2012" name="EMBO J.">
        <title>Genome-wide siRNA screen reveals amino acid starvation-induced autophagy requires SCOC and WAC.</title>
        <authorList>
            <person name="McKnight N.C."/>
            <person name="Jefferies H.B."/>
            <person name="Alemu E.A."/>
            <person name="Saunders R.E."/>
            <person name="Howell M."/>
            <person name="Johansen T."/>
            <person name="Tooze S.A."/>
        </authorList>
    </citation>
    <scope>FUNCTION</scope>
</reference>
<reference key="5">
    <citation type="journal article" date="2017" name="Nat. Cell Biol.">
        <title>The tetrameric kinesin Kif25 suppresses pre-mitotic centrosome separation to establish proper spindle orientation.</title>
        <authorList>
            <person name="Decarreau J."/>
            <person name="Wagenbach M."/>
            <person name="Lynch E."/>
            <person name="Halpern A.R."/>
            <person name="Vaughan J.C."/>
            <person name="Kollman J."/>
            <person name="Wordeman L."/>
        </authorList>
    </citation>
    <scope>FUNCTION</scope>
</reference>
<protein>
    <recommendedName>
        <fullName evidence="8">Kinesin-like protein KIF25</fullName>
    </recommendedName>
    <alternativeName>
        <fullName evidence="7">Kinesin-like protein 3</fullName>
    </alternativeName>
</protein>
<evidence type="ECO:0000250" key="1">
    <source>
        <dbReference type="UniProtKB" id="Q4R918"/>
    </source>
</evidence>
<evidence type="ECO:0000255" key="2">
    <source>
        <dbReference type="PROSITE-ProRule" id="PRU00283"/>
    </source>
</evidence>
<evidence type="ECO:0000256" key="3">
    <source>
        <dbReference type="SAM" id="MobiDB-lite"/>
    </source>
</evidence>
<evidence type="ECO:0000269" key="4">
    <source>
    </source>
</evidence>
<evidence type="ECO:0000269" key="5">
    <source>
    </source>
</evidence>
<evidence type="ECO:0000269" key="6">
    <source>
    </source>
</evidence>
<evidence type="ECO:0000303" key="7">
    <source>
    </source>
</evidence>
<evidence type="ECO:0000305" key="8"/>
<evidence type="ECO:0000305" key="9">
    <source>
    </source>
</evidence>
<evidence type="ECO:0000312" key="10">
    <source>
        <dbReference type="HGNC" id="HGNC:6390"/>
    </source>
</evidence>
<organism>
    <name type="scientific">Homo sapiens</name>
    <name type="common">Human</name>
    <dbReference type="NCBI Taxonomy" id="9606"/>
    <lineage>
        <taxon>Eukaryota</taxon>
        <taxon>Metazoa</taxon>
        <taxon>Chordata</taxon>
        <taxon>Craniata</taxon>
        <taxon>Vertebrata</taxon>
        <taxon>Euteleostomi</taxon>
        <taxon>Mammalia</taxon>
        <taxon>Eutheria</taxon>
        <taxon>Euarchontoglires</taxon>
        <taxon>Primates</taxon>
        <taxon>Haplorrhini</taxon>
        <taxon>Catarrhini</taxon>
        <taxon>Hominidae</taxon>
        <taxon>Homo</taxon>
    </lineage>
</organism>